<reference key="1">
    <citation type="journal article" date="2007" name="PLoS ONE">
        <title>Analysis of the neurotoxin complex genes in Clostridium botulinum A1-A4 and B1 strains: BoNT/A3, /Ba4 and /B1 clusters are located within plasmids.</title>
        <authorList>
            <person name="Smith T.J."/>
            <person name="Hill K.K."/>
            <person name="Foley B.T."/>
            <person name="Detter J.C."/>
            <person name="Munk A.C."/>
            <person name="Bruce D.C."/>
            <person name="Doggett N.A."/>
            <person name="Smith L.A."/>
            <person name="Marks J.D."/>
            <person name="Xie G."/>
            <person name="Brettin T.S."/>
        </authorList>
    </citation>
    <scope>NUCLEOTIDE SEQUENCE [LARGE SCALE GENOMIC DNA]</scope>
    <source>
        <strain>Loch Maree / Type A3</strain>
    </source>
</reference>
<feature type="chain" id="PRO_1000095278" description="Aspartyl/glutamyl-tRNA(Asn/Gln) amidotransferase subunit C">
    <location>
        <begin position="1"/>
        <end position="95"/>
    </location>
</feature>
<proteinExistence type="inferred from homology"/>
<sequence>MSVSKKDVEYVAELARLEFKEEEKDNFVNDLNKILNYMEKLDELNTDDVDIVVNPYYIENKYREDNVEKSMELKEVIDNAPENLEEYVIVPKVID</sequence>
<dbReference type="EC" id="6.3.5.-" evidence="1"/>
<dbReference type="EMBL" id="CP000962">
    <property type="protein sequence ID" value="ACA55307.1"/>
    <property type="molecule type" value="Genomic_DNA"/>
</dbReference>
<dbReference type="RefSeq" id="WP_012343309.1">
    <property type="nucleotide sequence ID" value="NC_010520.1"/>
</dbReference>
<dbReference type="SMR" id="B1L1H0"/>
<dbReference type="KEGG" id="cbl:CLK_2684"/>
<dbReference type="HOGENOM" id="CLU_105899_2_1_9"/>
<dbReference type="GO" id="GO:0050566">
    <property type="term" value="F:asparaginyl-tRNA synthase (glutamine-hydrolyzing) activity"/>
    <property type="evidence" value="ECO:0007669"/>
    <property type="project" value="RHEA"/>
</dbReference>
<dbReference type="GO" id="GO:0005524">
    <property type="term" value="F:ATP binding"/>
    <property type="evidence" value="ECO:0007669"/>
    <property type="project" value="UniProtKB-KW"/>
</dbReference>
<dbReference type="GO" id="GO:0050567">
    <property type="term" value="F:glutaminyl-tRNA synthase (glutamine-hydrolyzing) activity"/>
    <property type="evidence" value="ECO:0007669"/>
    <property type="project" value="UniProtKB-UniRule"/>
</dbReference>
<dbReference type="GO" id="GO:0070681">
    <property type="term" value="P:glutaminyl-tRNAGln biosynthesis via transamidation"/>
    <property type="evidence" value="ECO:0007669"/>
    <property type="project" value="TreeGrafter"/>
</dbReference>
<dbReference type="GO" id="GO:0006450">
    <property type="term" value="P:regulation of translational fidelity"/>
    <property type="evidence" value="ECO:0007669"/>
    <property type="project" value="InterPro"/>
</dbReference>
<dbReference type="GO" id="GO:0006412">
    <property type="term" value="P:translation"/>
    <property type="evidence" value="ECO:0007669"/>
    <property type="project" value="UniProtKB-UniRule"/>
</dbReference>
<dbReference type="Gene3D" id="1.10.20.60">
    <property type="entry name" value="Glu-tRNAGln amidotransferase C subunit, N-terminal domain"/>
    <property type="match status" value="1"/>
</dbReference>
<dbReference type="HAMAP" id="MF_00122">
    <property type="entry name" value="GatC"/>
    <property type="match status" value="1"/>
</dbReference>
<dbReference type="InterPro" id="IPR036113">
    <property type="entry name" value="Asp/Glu-ADT_sf_sub_c"/>
</dbReference>
<dbReference type="InterPro" id="IPR003837">
    <property type="entry name" value="GatC"/>
</dbReference>
<dbReference type="NCBIfam" id="TIGR00135">
    <property type="entry name" value="gatC"/>
    <property type="match status" value="1"/>
</dbReference>
<dbReference type="PANTHER" id="PTHR15004">
    <property type="entry name" value="GLUTAMYL-TRNA(GLN) AMIDOTRANSFERASE SUBUNIT C, MITOCHONDRIAL"/>
    <property type="match status" value="1"/>
</dbReference>
<dbReference type="PANTHER" id="PTHR15004:SF0">
    <property type="entry name" value="GLUTAMYL-TRNA(GLN) AMIDOTRANSFERASE SUBUNIT C, MITOCHONDRIAL"/>
    <property type="match status" value="1"/>
</dbReference>
<dbReference type="Pfam" id="PF02686">
    <property type="entry name" value="GatC"/>
    <property type="match status" value="1"/>
</dbReference>
<dbReference type="SUPFAM" id="SSF141000">
    <property type="entry name" value="Glu-tRNAGln amidotransferase C subunit"/>
    <property type="match status" value="1"/>
</dbReference>
<accession>B1L1H0</accession>
<gene>
    <name evidence="1" type="primary">gatC</name>
    <name type="ordered locus">CLK_2684</name>
</gene>
<name>GATC_CLOBM</name>
<comment type="function">
    <text evidence="1">Allows the formation of correctly charged Asn-tRNA(Asn) or Gln-tRNA(Gln) through the transamidation of misacylated Asp-tRNA(Asn) or Glu-tRNA(Gln) in organisms which lack either or both of asparaginyl-tRNA or glutaminyl-tRNA synthetases. The reaction takes place in the presence of glutamine and ATP through an activated phospho-Asp-tRNA(Asn) or phospho-Glu-tRNA(Gln).</text>
</comment>
<comment type="catalytic activity">
    <reaction evidence="1">
        <text>L-glutamyl-tRNA(Gln) + L-glutamine + ATP + H2O = L-glutaminyl-tRNA(Gln) + L-glutamate + ADP + phosphate + H(+)</text>
        <dbReference type="Rhea" id="RHEA:17521"/>
        <dbReference type="Rhea" id="RHEA-COMP:9681"/>
        <dbReference type="Rhea" id="RHEA-COMP:9684"/>
        <dbReference type="ChEBI" id="CHEBI:15377"/>
        <dbReference type="ChEBI" id="CHEBI:15378"/>
        <dbReference type="ChEBI" id="CHEBI:29985"/>
        <dbReference type="ChEBI" id="CHEBI:30616"/>
        <dbReference type="ChEBI" id="CHEBI:43474"/>
        <dbReference type="ChEBI" id="CHEBI:58359"/>
        <dbReference type="ChEBI" id="CHEBI:78520"/>
        <dbReference type="ChEBI" id="CHEBI:78521"/>
        <dbReference type="ChEBI" id="CHEBI:456216"/>
    </reaction>
</comment>
<comment type="catalytic activity">
    <reaction evidence="1">
        <text>L-aspartyl-tRNA(Asn) + L-glutamine + ATP + H2O = L-asparaginyl-tRNA(Asn) + L-glutamate + ADP + phosphate + 2 H(+)</text>
        <dbReference type="Rhea" id="RHEA:14513"/>
        <dbReference type="Rhea" id="RHEA-COMP:9674"/>
        <dbReference type="Rhea" id="RHEA-COMP:9677"/>
        <dbReference type="ChEBI" id="CHEBI:15377"/>
        <dbReference type="ChEBI" id="CHEBI:15378"/>
        <dbReference type="ChEBI" id="CHEBI:29985"/>
        <dbReference type="ChEBI" id="CHEBI:30616"/>
        <dbReference type="ChEBI" id="CHEBI:43474"/>
        <dbReference type="ChEBI" id="CHEBI:58359"/>
        <dbReference type="ChEBI" id="CHEBI:78515"/>
        <dbReference type="ChEBI" id="CHEBI:78516"/>
        <dbReference type="ChEBI" id="CHEBI:456216"/>
    </reaction>
</comment>
<comment type="subunit">
    <text evidence="1">Heterotrimer of A, B and C subunits.</text>
</comment>
<comment type="similarity">
    <text evidence="1">Belongs to the GatC family.</text>
</comment>
<keyword id="KW-0067">ATP-binding</keyword>
<keyword id="KW-0436">Ligase</keyword>
<keyword id="KW-0547">Nucleotide-binding</keyword>
<keyword id="KW-0648">Protein biosynthesis</keyword>
<organism>
    <name type="scientific">Clostridium botulinum (strain Loch Maree / Type A3)</name>
    <dbReference type="NCBI Taxonomy" id="498214"/>
    <lineage>
        <taxon>Bacteria</taxon>
        <taxon>Bacillati</taxon>
        <taxon>Bacillota</taxon>
        <taxon>Clostridia</taxon>
        <taxon>Eubacteriales</taxon>
        <taxon>Clostridiaceae</taxon>
        <taxon>Clostridium</taxon>
    </lineage>
</organism>
<protein>
    <recommendedName>
        <fullName evidence="1">Aspartyl/glutamyl-tRNA(Asn/Gln) amidotransferase subunit C</fullName>
        <shortName evidence="1">Asp/Glu-ADT subunit C</shortName>
        <ecNumber evidence="1">6.3.5.-</ecNumber>
    </recommendedName>
</protein>
<evidence type="ECO:0000255" key="1">
    <source>
        <dbReference type="HAMAP-Rule" id="MF_00122"/>
    </source>
</evidence>